<accession>B1KT95</accession>
<reference key="1">
    <citation type="journal article" date="2007" name="PLoS ONE">
        <title>Analysis of the neurotoxin complex genes in Clostridium botulinum A1-A4 and B1 strains: BoNT/A3, /Ba4 and /B1 clusters are located within plasmids.</title>
        <authorList>
            <person name="Smith T.J."/>
            <person name="Hill K.K."/>
            <person name="Foley B.T."/>
            <person name="Detter J.C."/>
            <person name="Munk A.C."/>
            <person name="Bruce D.C."/>
            <person name="Doggett N.A."/>
            <person name="Smith L.A."/>
            <person name="Marks J.D."/>
            <person name="Xie G."/>
            <person name="Brettin T.S."/>
        </authorList>
    </citation>
    <scope>NUCLEOTIDE SEQUENCE [LARGE SCALE GENOMIC DNA]</scope>
    <source>
        <strain>Loch Maree / Type A3</strain>
    </source>
</reference>
<feature type="chain" id="PRO_1000195603" description="Large ribosomal subunit protein uL11">
    <location>
        <begin position="1"/>
        <end position="141"/>
    </location>
</feature>
<gene>
    <name evidence="1" type="primary">rplK</name>
    <name type="ordered locus">CLK_2936</name>
</gene>
<dbReference type="EMBL" id="CP000962">
    <property type="protein sequence ID" value="ACA54121.1"/>
    <property type="molecule type" value="Genomic_DNA"/>
</dbReference>
<dbReference type="RefSeq" id="WP_003357261.1">
    <property type="nucleotide sequence ID" value="NC_010520.1"/>
</dbReference>
<dbReference type="SMR" id="B1KT95"/>
<dbReference type="GeneID" id="5186670"/>
<dbReference type="KEGG" id="cbl:CLK_2936"/>
<dbReference type="HOGENOM" id="CLU_074237_2_1_9"/>
<dbReference type="GO" id="GO:0022625">
    <property type="term" value="C:cytosolic large ribosomal subunit"/>
    <property type="evidence" value="ECO:0007669"/>
    <property type="project" value="TreeGrafter"/>
</dbReference>
<dbReference type="GO" id="GO:0070180">
    <property type="term" value="F:large ribosomal subunit rRNA binding"/>
    <property type="evidence" value="ECO:0007669"/>
    <property type="project" value="UniProtKB-UniRule"/>
</dbReference>
<dbReference type="GO" id="GO:0003735">
    <property type="term" value="F:structural constituent of ribosome"/>
    <property type="evidence" value="ECO:0007669"/>
    <property type="project" value="InterPro"/>
</dbReference>
<dbReference type="GO" id="GO:0006412">
    <property type="term" value="P:translation"/>
    <property type="evidence" value="ECO:0007669"/>
    <property type="project" value="UniProtKB-UniRule"/>
</dbReference>
<dbReference type="CDD" id="cd00349">
    <property type="entry name" value="Ribosomal_L11"/>
    <property type="match status" value="1"/>
</dbReference>
<dbReference type="FunFam" id="1.10.10.250:FF:000001">
    <property type="entry name" value="50S ribosomal protein L11"/>
    <property type="match status" value="1"/>
</dbReference>
<dbReference type="FunFam" id="3.30.1550.10:FF:000001">
    <property type="entry name" value="50S ribosomal protein L11"/>
    <property type="match status" value="1"/>
</dbReference>
<dbReference type="Gene3D" id="1.10.10.250">
    <property type="entry name" value="Ribosomal protein L11, C-terminal domain"/>
    <property type="match status" value="1"/>
</dbReference>
<dbReference type="Gene3D" id="3.30.1550.10">
    <property type="entry name" value="Ribosomal protein L11/L12, N-terminal domain"/>
    <property type="match status" value="1"/>
</dbReference>
<dbReference type="HAMAP" id="MF_00736">
    <property type="entry name" value="Ribosomal_uL11"/>
    <property type="match status" value="1"/>
</dbReference>
<dbReference type="InterPro" id="IPR000911">
    <property type="entry name" value="Ribosomal_uL11"/>
</dbReference>
<dbReference type="InterPro" id="IPR006519">
    <property type="entry name" value="Ribosomal_uL11_bac-typ"/>
</dbReference>
<dbReference type="InterPro" id="IPR020783">
    <property type="entry name" value="Ribosomal_uL11_C"/>
</dbReference>
<dbReference type="InterPro" id="IPR036769">
    <property type="entry name" value="Ribosomal_uL11_C_sf"/>
</dbReference>
<dbReference type="InterPro" id="IPR020784">
    <property type="entry name" value="Ribosomal_uL11_N"/>
</dbReference>
<dbReference type="InterPro" id="IPR036796">
    <property type="entry name" value="Ribosomal_uL11_N_sf"/>
</dbReference>
<dbReference type="NCBIfam" id="TIGR01632">
    <property type="entry name" value="L11_bact"/>
    <property type="match status" value="1"/>
</dbReference>
<dbReference type="PANTHER" id="PTHR11661">
    <property type="entry name" value="60S RIBOSOMAL PROTEIN L12"/>
    <property type="match status" value="1"/>
</dbReference>
<dbReference type="PANTHER" id="PTHR11661:SF1">
    <property type="entry name" value="LARGE RIBOSOMAL SUBUNIT PROTEIN UL11M"/>
    <property type="match status" value="1"/>
</dbReference>
<dbReference type="Pfam" id="PF00298">
    <property type="entry name" value="Ribosomal_L11"/>
    <property type="match status" value="1"/>
</dbReference>
<dbReference type="Pfam" id="PF03946">
    <property type="entry name" value="Ribosomal_L11_N"/>
    <property type="match status" value="1"/>
</dbReference>
<dbReference type="SMART" id="SM00649">
    <property type="entry name" value="RL11"/>
    <property type="match status" value="1"/>
</dbReference>
<dbReference type="SUPFAM" id="SSF54747">
    <property type="entry name" value="Ribosomal L11/L12e N-terminal domain"/>
    <property type="match status" value="1"/>
</dbReference>
<dbReference type="SUPFAM" id="SSF46906">
    <property type="entry name" value="Ribosomal protein L11, C-terminal domain"/>
    <property type="match status" value="1"/>
</dbReference>
<protein>
    <recommendedName>
        <fullName evidence="1">Large ribosomal subunit protein uL11</fullName>
    </recommendedName>
    <alternativeName>
        <fullName evidence="2">50S ribosomal protein L11</fullName>
    </alternativeName>
</protein>
<sequence>MAKKVVGMIKLQLPAGKASPAPPVGPALGQHGVNIMGFCKEFNAKTANQAGLIIPVVITVYQDRSFSFILKTPPAAVLLKKAAGIESGSGVPNKTKVAKVTKDQIREIAETKMPDLNAGSIETAMSMIAGTARSMGITVEE</sequence>
<keyword id="KW-0488">Methylation</keyword>
<keyword id="KW-0687">Ribonucleoprotein</keyword>
<keyword id="KW-0689">Ribosomal protein</keyword>
<keyword id="KW-0694">RNA-binding</keyword>
<keyword id="KW-0699">rRNA-binding</keyword>
<comment type="function">
    <text evidence="1">Forms part of the ribosomal stalk which helps the ribosome interact with GTP-bound translation factors.</text>
</comment>
<comment type="subunit">
    <text evidence="1">Part of the ribosomal stalk of the 50S ribosomal subunit. Interacts with L10 and the large rRNA to form the base of the stalk. L10 forms an elongated spine to which L12 dimers bind in a sequential fashion forming a multimeric L10(L12)X complex.</text>
</comment>
<comment type="PTM">
    <text evidence="1">One or more lysine residues are methylated.</text>
</comment>
<comment type="similarity">
    <text evidence="1">Belongs to the universal ribosomal protein uL11 family.</text>
</comment>
<organism>
    <name type="scientific">Clostridium botulinum (strain Loch Maree / Type A3)</name>
    <dbReference type="NCBI Taxonomy" id="498214"/>
    <lineage>
        <taxon>Bacteria</taxon>
        <taxon>Bacillati</taxon>
        <taxon>Bacillota</taxon>
        <taxon>Clostridia</taxon>
        <taxon>Eubacteriales</taxon>
        <taxon>Clostridiaceae</taxon>
        <taxon>Clostridium</taxon>
    </lineage>
</organism>
<name>RL11_CLOBM</name>
<proteinExistence type="inferred from homology"/>
<evidence type="ECO:0000255" key="1">
    <source>
        <dbReference type="HAMAP-Rule" id="MF_00736"/>
    </source>
</evidence>
<evidence type="ECO:0000305" key="2"/>